<comment type="function">
    <text>Involved in cell sporulation. Hydrolyzes gamma-D-Glu-L-(meso)A2pm linkages only in those peptide units that have a free N-terminal L-alanine.</text>
</comment>
<comment type="subcellular location">
    <subcellularLocation>
        <location>Cytoplasm</location>
    </subcellularLocation>
</comment>
<comment type="developmental stage">
    <text>Expressed at onset of, and throughout sporulation.</text>
</comment>
<comment type="similarity">
    <text evidence="2 3">Belongs to the peptidase C40 family.</text>
</comment>
<name>DPP6_LYSSH</name>
<accession>P39043</accession>
<sequence length="271" mass="30604">MNAIVIAMMANLYAEPDLHAELVDEILYGMPVQIIEELENDWLYVRTAYRYEGYCQRNDVLFDDAITNTWIQKAQHVIGQRFADVLQEPKIQSTKIITLVKGSILYNVDSDTTSNTPWTAVQLATGEIGYLRSQWLHPKIAEHTFEEHAFRENVVQTALSYIATPYRWGGKSPLGIDCSGLCSMAYLLNGVIIFRDARIVEGFPIKEITIDRMQKGDLLFFPGHVALYLGQTLYVHASLGGNEVNVNSLDEQHPLYRQDLATTITAIGSLF</sequence>
<protein>
    <recommendedName>
        <fullName>Dipeptidyl-peptidase 6</fullName>
        <ecNumber>3.4.22.-</ecNumber>
    </recommendedName>
    <alternativeName>
        <fullName>Dipeptidyl-peptidase VI</fullName>
        <shortName>DPP VI</shortName>
    </alternativeName>
    <alternativeName>
        <fullName>Endopeptidase II</fullName>
    </alternativeName>
    <alternativeName>
        <fullName>Gamma-D-glutamyl-L-diamino acid endopeptidase II</fullName>
    </alternativeName>
    <alternativeName>
        <fullName>Gamma-D-glutamyl-MESO-diaminopimelate peptidase II</fullName>
    </alternativeName>
</protein>
<proteinExistence type="evidence at protein level"/>
<organism>
    <name type="scientific">Lysinibacillus sphaericus</name>
    <name type="common">Bacillus sphaericus</name>
    <dbReference type="NCBI Taxonomy" id="1421"/>
    <lineage>
        <taxon>Bacteria</taxon>
        <taxon>Bacillati</taxon>
        <taxon>Bacillota</taxon>
        <taxon>Bacilli</taxon>
        <taxon>Bacillales</taxon>
        <taxon>Bacillaceae</taxon>
        <taxon>Lysinibacillus</taxon>
    </lineage>
</organism>
<dbReference type="EC" id="3.4.22.-"/>
<dbReference type="EMBL" id="X83680">
    <property type="protein sequence ID" value="CAA58651.1"/>
    <property type="molecule type" value="Genomic_DNA"/>
</dbReference>
<dbReference type="EMBL" id="X64809">
    <property type="protein sequence ID" value="CAA46030.1"/>
    <property type="molecule type" value="Genomic_DNA"/>
</dbReference>
<dbReference type="PIR" id="S26056">
    <property type="entry name" value="S26056"/>
</dbReference>
<dbReference type="SMR" id="P39043"/>
<dbReference type="MEROPS" id="C40.001"/>
<dbReference type="GO" id="GO:0005737">
    <property type="term" value="C:cytoplasm"/>
    <property type="evidence" value="ECO:0007669"/>
    <property type="project" value="UniProtKB-SubCell"/>
</dbReference>
<dbReference type="GO" id="GO:0008234">
    <property type="term" value="F:cysteine-type peptidase activity"/>
    <property type="evidence" value="ECO:0007669"/>
    <property type="project" value="UniProtKB-KW"/>
</dbReference>
<dbReference type="GO" id="GO:0006508">
    <property type="term" value="P:proteolysis"/>
    <property type="evidence" value="ECO:0007669"/>
    <property type="project" value="UniProtKB-KW"/>
</dbReference>
<dbReference type="GO" id="GO:0030435">
    <property type="term" value="P:sporulation resulting in formation of a cellular spore"/>
    <property type="evidence" value="ECO:0007669"/>
    <property type="project" value="UniProtKB-KW"/>
</dbReference>
<dbReference type="Gene3D" id="3.90.1720.10">
    <property type="entry name" value="endopeptidase domain like (from Nostoc punctiforme)"/>
    <property type="match status" value="1"/>
</dbReference>
<dbReference type="Gene3D" id="2.30.30.40">
    <property type="entry name" value="SH3 Domains"/>
    <property type="match status" value="2"/>
</dbReference>
<dbReference type="InterPro" id="IPR000064">
    <property type="entry name" value="NLP_P60_dom"/>
</dbReference>
<dbReference type="InterPro" id="IPR038765">
    <property type="entry name" value="Papain-like_cys_pep_sf"/>
</dbReference>
<dbReference type="InterPro" id="IPR051202">
    <property type="entry name" value="Peptidase_C40"/>
</dbReference>
<dbReference type="InterPro" id="IPR003646">
    <property type="entry name" value="SH3-like_bac-type"/>
</dbReference>
<dbReference type="PANTHER" id="PTHR47053">
    <property type="entry name" value="MUREIN DD-ENDOPEPTIDASE MEPH-RELATED"/>
    <property type="match status" value="1"/>
</dbReference>
<dbReference type="PANTHER" id="PTHR47053:SF1">
    <property type="entry name" value="MUREIN DD-ENDOPEPTIDASE MEPH-RELATED"/>
    <property type="match status" value="1"/>
</dbReference>
<dbReference type="Pfam" id="PF00877">
    <property type="entry name" value="NLPC_P60"/>
    <property type="match status" value="1"/>
</dbReference>
<dbReference type="Pfam" id="PF08239">
    <property type="entry name" value="SH3_3"/>
    <property type="match status" value="1"/>
</dbReference>
<dbReference type="SUPFAM" id="SSF54001">
    <property type="entry name" value="Cysteine proteinases"/>
    <property type="match status" value="1"/>
</dbReference>
<dbReference type="PROSITE" id="PS51935">
    <property type="entry name" value="NLPC_P60"/>
    <property type="match status" value="1"/>
</dbReference>
<dbReference type="PROSITE" id="PS51781">
    <property type="entry name" value="SH3B"/>
    <property type="match status" value="2"/>
</dbReference>
<evidence type="ECO:0000255" key="1">
    <source>
        <dbReference type="PROSITE-ProRule" id="PRU01117"/>
    </source>
</evidence>
<evidence type="ECO:0000255" key="2">
    <source>
        <dbReference type="PROSITE-ProRule" id="PRU01284"/>
    </source>
</evidence>
<evidence type="ECO:0000305" key="3"/>
<feature type="chain" id="PRO_0000213726" description="Dipeptidyl-peptidase 6">
    <location>
        <begin position="1"/>
        <end position="271"/>
    </location>
</feature>
<feature type="domain" description="SH3b 1" evidence="1">
    <location>
        <begin position="1"/>
        <end position="64"/>
    </location>
</feature>
<feature type="domain" description="SH3b 2" evidence="1">
    <location>
        <begin position="72"/>
        <end position="140"/>
    </location>
</feature>
<feature type="domain" description="NlpC/P60" evidence="2">
    <location>
        <begin position="148"/>
        <end position="268"/>
    </location>
</feature>
<feature type="active site" description="Nucleophile" evidence="2">
    <location>
        <position position="178"/>
    </location>
</feature>
<feature type="active site" description="Proton acceptor" evidence="2">
    <location>
        <position position="224"/>
    </location>
</feature>
<feature type="active site" evidence="2">
    <location>
        <position position="236"/>
    </location>
</feature>
<reference key="1">
    <citation type="journal article" date="1992" name="FEMS Microbiol. Lett.">
        <title>Cloning and nucleotide sequence of the gene encoding the gamma-D-glutamyl-L-diamino acid endopeptidase II of Bacillus sphaericus.</title>
        <authorList>
            <person name="Hourdou M.-L."/>
            <person name="Duez C."/>
            <person name="Joris B."/>
            <person name="Vacheron M.-J."/>
            <person name="Guinand M."/>
            <person name="Michel G."/>
            <person name="Ghuysen J.-M."/>
        </authorList>
    </citation>
    <scope>NUCLEOTIDE SEQUENCE [GENOMIC DNA]</scope>
    <source>
        <strain>DSM 396 / NCTC 9602</strain>
    </source>
</reference>
<reference key="2">
    <citation type="journal article" date="1992" name="Int. J. Biochem.">
        <title>Purification and partial characterization of the gamma-D-glutamyl-L-di-amino acid endopeptidase II from Bacillus sphaericus.</title>
        <authorList>
            <person name="Bourgogne T."/>
            <person name="Vacheron M.-J."/>
            <person name="Guinand M."/>
            <person name="Michel G."/>
        </authorList>
    </citation>
    <scope>PROTEIN SEQUENCE OF 1-38</scope>
    <scope>CHARACTERIZATION</scope>
    <source>
        <strain>DSM 396 / NCTC 9602</strain>
    </source>
</reference>
<keyword id="KW-0963">Cytoplasm</keyword>
<keyword id="KW-0903">Direct protein sequencing</keyword>
<keyword id="KW-0378">Hydrolase</keyword>
<keyword id="KW-0645">Protease</keyword>
<keyword id="KW-0749">Sporulation</keyword>
<keyword id="KW-0788">Thiol protease</keyword>